<reference key="1">
    <citation type="journal article" date="1993" name="Nature">
        <title>Potential virulence determinants in terminal regions of variola smallpox virus genome.</title>
        <authorList>
            <person name="Massung R.F."/>
            <person name="Esposito J.J."/>
            <person name="Liu L.I."/>
            <person name="Qi J."/>
            <person name="Utterback T.R."/>
            <person name="Knight J.C."/>
            <person name="Aubin L."/>
            <person name="Yuran T.E."/>
            <person name="Parsons J.M."/>
            <person name="Loparev V.N."/>
            <person name="Selivanov N.A."/>
            <person name="Cavallaro K.F."/>
            <person name="Kerlavage A.R."/>
            <person name="Mahy B.W.J."/>
            <person name="Venter J.C."/>
        </authorList>
    </citation>
    <scope>NUCLEOTIDE SEQUENCE [GENOMIC DNA]</scope>
    <source>
        <strain>Bangladesh-1975</strain>
    </source>
</reference>
<gene>
    <name type="primary">OPG116</name>
    <name type="synonym">UNG</name>
    <name type="ORF">D4R</name>
    <name type="ORF">F4R</name>
</gene>
<organism>
    <name type="scientific">Variola virus</name>
    <dbReference type="NCBI Taxonomy" id="10255"/>
    <lineage>
        <taxon>Viruses</taxon>
        <taxon>Varidnaviria</taxon>
        <taxon>Bamfordvirae</taxon>
        <taxon>Nucleocytoviricota</taxon>
        <taxon>Pokkesviricetes</taxon>
        <taxon>Chitovirales</taxon>
        <taxon>Poxviridae</taxon>
        <taxon>Chordopoxvirinae</taxon>
        <taxon>Orthopoxvirus</taxon>
    </lineage>
</organism>
<organismHost>
    <name type="scientific">Homo sapiens</name>
    <name type="common">Human</name>
    <dbReference type="NCBI Taxonomy" id="9606"/>
</organismHost>
<protein>
    <recommendedName>
        <fullName>Uracil-DNA glycosylase</fullName>
        <shortName>UDG</shortName>
        <ecNumber evidence="1">3.2.2.27</ecNumber>
    </recommendedName>
</protein>
<accession>P0DSP8</accession>
<accession>P32988</accession>
<keyword id="KW-0227">DNA damage</keyword>
<keyword id="KW-0234">DNA repair</keyword>
<keyword id="KW-0238">DNA-binding</keyword>
<keyword id="KW-0378">Hydrolase</keyword>
<feature type="chain" id="PRO_0000448129" description="Uracil-DNA glycosylase">
    <location>
        <begin position="1"/>
        <end position="218"/>
    </location>
</feature>
<feature type="active site" description="Proton acceptor" evidence="2">
    <location>
        <position position="68"/>
    </location>
</feature>
<dbReference type="EC" id="3.2.2.27" evidence="1"/>
<dbReference type="EMBL" id="L22579">
    <property type="protein sequence ID" value="AAA60842.1"/>
    <property type="molecule type" value="Genomic_DNA"/>
</dbReference>
<dbReference type="SMR" id="P0DSP8"/>
<dbReference type="Proteomes" id="UP000119805">
    <property type="component" value="Segment"/>
</dbReference>
<dbReference type="GO" id="GO:0003677">
    <property type="term" value="F:DNA binding"/>
    <property type="evidence" value="ECO:0007669"/>
    <property type="project" value="UniProtKB-KW"/>
</dbReference>
<dbReference type="GO" id="GO:0004844">
    <property type="term" value="F:uracil DNA N-glycosylase activity"/>
    <property type="evidence" value="ECO:0007669"/>
    <property type="project" value="UniProtKB-EC"/>
</dbReference>
<dbReference type="GO" id="GO:0006281">
    <property type="term" value="P:DNA repair"/>
    <property type="evidence" value="ECO:0007669"/>
    <property type="project" value="UniProtKB-KW"/>
</dbReference>
<dbReference type="CDD" id="cd19372">
    <property type="entry name" value="UDG_F1_VAVC_D4-like"/>
    <property type="match status" value="1"/>
</dbReference>
<dbReference type="FunFam" id="3.40.470.10:FF:000011">
    <property type="entry name" value="Uracil-DNA glycosylase"/>
    <property type="match status" value="1"/>
</dbReference>
<dbReference type="Gene3D" id="3.40.470.10">
    <property type="entry name" value="Uracil-DNA glycosylase-like domain"/>
    <property type="match status" value="1"/>
</dbReference>
<dbReference type="InterPro" id="IPR018085">
    <property type="entry name" value="Ura-DNA_Glyclase_AS"/>
</dbReference>
<dbReference type="InterPro" id="IPR036895">
    <property type="entry name" value="Uracil-DNA_glycosylase-like_sf"/>
</dbReference>
<dbReference type="SUPFAM" id="SSF52141">
    <property type="entry name" value="Uracil-DNA glycosylase-like"/>
    <property type="match status" value="1"/>
</dbReference>
<dbReference type="PROSITE" id="PS00130">
    <property type="entry name" value="U_DNA_GLYCOSYLASE"/>
    <property type="match status" value="1"/>
</dbReference>
<name>UNG_VARV</name>
<sequence length="218" mass="25088">MNSVTVSHAPYTITYHDDWEPVMNQLVEFYNEVASWLLRDETSPIPDKFFIQLKQPLRNKRVCVCGIDPYPKDGTGVPFESPNFTKKSIKEIASSISRLTGVIDYKGYNLNIIDGVIPWNYYLSCKLGETKSHAIYWDKISKLLLHHITKHVSVLYCLGKTDFSNIRAKLESPVTTIVGYHPAARDRQFEKDRSFEIINVLLELDNKAPINWAQGFIY</sequence>
<comment type="function">
    <text evidence="1">Plays an essential role in viral replication as a component of the DNA polymerase processivity factor. Excises uracil residues from the DNA which can arise as a result of misincorporation of dUMP residues by DNA polymerase or due to deamination of cytosine.</text>
</comment>
<comment type="catalytic activity">
    <reaction evidence="1">
        <text>Hydrolyzes single-stranded DNA or mismatched double-stranded DNA and polynucleotides, releasing free uracil.</text>
        <dbReference type="EC" id="3.2.2.27"/>
    </reaction>
</comment>
<comment type="subunit">
    <text evidence="1">Homodimer. Interacts with protein OPG148. Component of the Uracil-DNA glycosylase(UDG)-OPG148-polymerase complex; OPG148 and UDG form a heterodimeric processivity factor that associates with OPG71 to form the processive polymerase holoenzyme.</text>
</comment>
<comment type="similarity">
    <text evidence="3">Belongs to the uracil-DNA glycosylase (UDG) superfamily. UNG family.</text>
</comment>
<proteinExistence type="inferred from homology"/>
<evidence type="ECO:0000250" key="1">
    <source>
        <dbReference type="UniProtKB" id="P04303"/>
    </source>
</evidence>
<evidence type="ECO:0000255" key="2">
    <source>
        <dbReference type="PROSITE-ProRule" id="PRU10072"/>
    </source>
</evidence>
<evidence type="ECO:0000305" key="3"/>